<evidence type="ECO:0000250" key="1"/>
<evidence type="ECO:0000255" key="2"/>
<evidence type="ECO:0000305" key="3"/>
<gene>
    <name type="primary">MEL6</name>
</gene>
<proteinExistence type="inferred from homology"/>
<reference key="1">
    <citation type="journal article" date="1994" name="Yeast">
        <title>Consideration of the evolution of the Saccharomyces cerevisiae MEL gene family on the basis of the nucleotide sequences of the genes and their flanking regions.</title>
        <authorList>
            <person name="Turakainen H."/>
            <person name="Kristo P."/>
            <person name="Korhola M."/>
        </authorList>
    </citation>
    <scope>NUCLEOTIDE SEQUENCE [GENOMIC DNA]</scope>
</reference>
<sequence>MFAFYFLTACISLKGVFGVSPSYNGLGLTPQMGWDNWNTFACDVSEQLLLDTADRISDLGLKDMGYKYVILDDCWSSGRDSDGFLVADKHKFPNGMGHVADHLHNNSFLFGMYSSAGEYTCAGYPGSLGREEEDAQFFANNRVDYLKYDNCYNKGQFGTPDVSYHRYKAMSDALNKTGRPIFYSLCNWGQDLTFYWGSGIANSWRMSGDITAEFTRPDSRCPCDGDEYDCKYAGFHCSIMNILNKAAPMGQNAGVGGWNDLDNLEVGVGNLTDDEEKAHFSMWAMVKSPLIIGADVNHLKASSYSIYSQASVIAINQDPKGIPATRVWRYYVSDTDEYGQGEIQMWSGPLDNGDQVVALLNGGSVARPMNTTLEEIFFDSNLGSKELTSTWDIYDLWANRVDNSTASAILEQNKAATGILYNATEQSYKDGLSKNDTRLFGQKIGSLSPNAILNTTVPAHGIAFYRLRPSA</sequence>
<name>MEL6_YEASX</name>
<accession>P41947</accession>
<feature type="signal peptide" evidence="1">
    <location>
        <begin position="1"/>
        <end position="18"/>
    </location>
</feature>
<feature type="chain" id="PRO_0000001016" description="Alpha-galactosidase 6">
    <location>
        <begin position="19"/>
        <end position="471"/>
    </location>
</feature>
<feature type="active site" description="Nucleophile" evidence="1">
    <location>
        <position position="149"/>
    </location>
</feature>
<feature type="active site" description="Proton donor" evidence="1">
    <location>
        <position position="209"/>
    </location>
</feature>
<feature type="binding site" evidence="1">
    <location>
        <position position="72"/>
    </location>
    <ligand>
        <name>substrate</name>
    </ligand>
</feature>
<feature type="binding site" evidence="1">
    <location>
        <position position="73"/>
    </location>
    <ligand>
        <name>substrate</name>
    </ligand>
</feature>
<feature type="binding site" evidence="1">
    <location>
        <position position="147"/>
    </location>
    <ligand>
        <name>substrate</name>
    </ligand>
</feature>
<feature type="binding site" evidence="1">
    <location>
        <position position="205"/>
    </location>
    <ligand>
        <name>substrate</name>
    </ligand>
</feature>
<feature type="binding site" evidence="1">
    <location>
        <position position="251"/>
    </location>
    <ligand>
        <name>substrate</name>
    </ligand>
</feature>
<feature type="glycosylation site" description="N-linked (GlcNAc...) asparagine" evidence="2">
    <location>
        <position position="105"/>
    </location>
</feature>
<feature type="glycosylation site" description="N-linked (GlcNAc...) asparagine" evidence="2">
    <location>
        <position position="175"/>
    </location>
</feature>
<feature type="glycosylation site" description="N-linked (GlcNAc...) asparagine" evidence="2">
    <location>
        <position position="270"/>
    </location>
</feature>
<feature type="glycosylation site" description="N-linked (GlcNAc...) asparagine" evidence="2">
    <location>
        <position position="370"/>
    </location>
</feature>
<feature type="glycosylation site" description="N-linked (GlcNAc...) asparagine" evidence="2">
    <location>
        <position position="403"/>
    </location>
</feature>
<feature type="glycosylation site" description="N-linked (GlcNAc...) asparagine" evidence="2">
    <location>
        <position position="422"/>
    </location>
</feature>
<feature type="glycosylation site" description="N-linked (GlcNAc...) asparagine" evidence="2">
    <location>
        <position position="435"/>
    </location>
</feature>
<feature type="glycosylation site" description="N-linked (GlcNAc...) asparagine" evidence="2">
    <location>
        <position position="454"/>
    </location>
</feature>
<feature type="disulfide bond" evidence="1">
    <location>
        <begin position="42"/>
        <end position="74"/>
    </location>
</feature>
<feature type="disulfide bond" evidence="1">
    <location>
        <begin position="121"/>
        <end position="151"/>
    </location>
</feature>
<feature type="disulfide bond" evidence="1">
    <location>
        <begin position="221"/>
        <end position="237"/>
    </location>
</feature>
<feature type="disulfide bond" evidence="1">
    <location>
        <begin position="223"/>
        <end position="230"/>
    </location>
</feature>
<dbReference type="EC" id="3.2.1.22"/>
<dbReference type="EMBL" id="Z37510">
    <property type="protein sequence ID" value="CAA85739.1"/>
    <property type="molecule type" value="Genomic_DNA"/>
</dbReference>
<dbReference type="PIR" id="S50312">
    <property type="entry name" value="S50312"/>
</dbReference>
<dbReference type="SMR" id="P41947"/>
<dbReference type="CAZy" id="GH27">
    <property type="family name" value="Glycoside Hydrolase Family 27"/>
</dbReference>
<dbReference type="GlyCosmos" id="P41947">
    <property type="glycosylation" value="8 sites, No reported glycans"/>
</dbReference>
<dbReference type="SGD" id="S000029665">
    <property type="gene designation" value="MEL6"/>
</dbReference>
<dbReference type="GO" id="GO:0005576">
    <property type="term" value="C:extracellular region"/>
    <property type="evidence" value="ECO:0007669"/>
    <property type="project" value="UniProtKB-SubCell"/>
</dbReference>
<dbReference type="GO" id="GO:0004557">
    <property type="term" value="F:alpha-galactosidase activity"/>
    <property type="evidence" value="ECO:0000250"/>
    <property type="project" value="SGD"/>
</dbReference>
<dbReference type="GO" id="GO:0005995">
    <property type="term" value="P:melibiose catabolic process"/>
    <property type="evidence" value="ECO:0000315"/>
    <property type="project" value="SGD"/>
</dbReference>
<dbReference type="CDD" id="cd14792">
    <property type="entry name" value="GH27"/>
    <property type="match status" value="1"/>
</dbReference>
<dbReference type="FunFam" id="3.20.20.70:FF:000202">
    <property type="entry name" value="Alpha-galactosidase"/>
    <property type="match status" value="1"/>
</dbReference>
<dbReference type="Gene3D" id="3.20.20.70">
    <property type="entry name" value="Aldolase class I"/>
    <property type="match status" value="1"/>
</dbReference>
<dbReference type="Gene3D" id="2.60.40.1180">
    <property type="entry name" value="Golgi alpha-mannosidase II"/>
    <property type="match status" value="1"/>
</dbReference>
<dbReference type="InterPro" id="IPR013785">
    <property type="entry name" value="Aldolase_TIM"/>
</dbReference>
<dbReference type="InterPro" id="IPR002241">
    <property type="entry name" value="Glyco_hydro_27"/>
</dbReference>
<dbReference type="InterPro" id="IPR000111">
    <property type="entry name" value="Glyco_hydro_27/36_CS"/>
</dbReference>
<dbReference type="InterPro" id="IPR013780">
    <property type="entry name" value="Glyco_hydro_b"/>
</dbReference>
<dbReference type="InterPro" id="IPR006215">
    <property type="entry name" value="Glyco_hydro_melibiase"/>
</dbReference>
<dbReference type="InterPro" id="IPR017853">
    <property type="entry name" value="Glycoside_hydrolase_SF"/>
</dbReference>
<dbReference type="InterPro" id="IPR041233">
    <property type="entry name" value="Melibiase_C"/>
</dbReference>
<dbReference type="PANTHER" id="PTHR11452:SF75">
    <property type="entry name" value="ALPHA-GALACTOSIDASE MEL1"/>
    <property type="match status" value="1"/>
</dbReference>
<dbReference type="PANTHER" id="PTHR11452">
    <property type="entry name" value="ALPHA-GALACTOSIDASE/ALPHA-N-ACETYLGALACTOSAMINIDASE"/>
    <property type="match status" value="1"/>
</dbReference>
<dbReference type="Pfam" id="PF16499">
    <property type="entry name" value="Melibiase_2"/>
    <property type="match status" value="1"/>
</dbReference>
<dbReference type="Pfam" id="PF17801">
    <property type="entry name" value="Melibiase_C"/>
    <property type="match status" value="1"/>
</dbReference>
<dbReference type="PRINTS" id="PR00740">
    <property type="entry name" value="GLHYDRLASE27"/>
</dbReference>
<dbReference type="PRINTS" id="PR00748">
    <property type="entry name" value="MELIBIASE"/>
</dbReference>
<dbReference type="SUPFAM" id="SSF51445">
    <property type="entry name" value="(Trans)glycosidases"/>
    <property type="match status" value="1"/>
</dbReference>
<dbReference type="SUPFAM" id="SSF51011">
    <property type="entry name" value="Glycosyl hydrolase domain"/>
    <property type="match status" value="1"/>
</dbReference>
<dbReference type="PROSITE" id="PS00512">
    <property type="entry name" value="ALPHA_GALACTOSIDASE"/>
    <property type="match status" value="1"/>
</dbReference>
<protein>
    <recommendedName>
        <fullName>Alpha-galactosidase 6</fullName>
        <ecNumber>3.2.1.22</ecNumber>
    </recommendedName>
    <alternativeName>
        <fullName>Alpha-D-galactoside galactohydrolase 6</fullName>
    </alternativeName>
    <alternativeName>
        <fullName>Melibiase 6</fullName>
    </alternativeName>
</protein>
<comment type="catalytic activity">
    <reaction>
        <text>Hydrolysis of terminal, non-reducing alpha-D-galactose residues in alpha-D-galactosides, including galactose oligosaccharides, galactomannans and galactolipids.</text>
        <dbReference type="EC" id="3.2.1.22"/>
    </reaction>
</comment>
<comment type="subunit">
    <text evidence="1">Homotetramer.</text>
</comment>
<comment type="subcellular location">
    <subcellularLocation>
        <location evidence="1">Secreted</location>
    </subcellularLocation>
</comment>
<comment type="similarity">
    <text evidence="3">Belongs to the glycosyl hydrolase 27 family.</text>
</comment>
<organism>
    <name type="scientific">Saccharomyces cerevisiae</name>
    <name type="common">Baker's yeast</name>
    <dbReference type="NCBI Taxonomy" id="4932"/>
    <lineage>
        <taxon>Eukaryota</taxon>
        <taxon>Fungi</taxon>
        <taxon>Dikarya</taxon>
        <taxon>Ascomycota</taxon>
        <taxon>Saccharomycotina</taxon>
        <taxon>Saccharomycetes</taxon>
        <taxon>Saccharomycetales</taxon>
        <taxon>Saccharomycetaceae</taxon>
        <taxon>Saccharomyces</taxon>
    </lineage>
</organism>
<keyword id="KW-1015">Disulfide bond</keyword>
<keyword id="KW-0325">Glycoprotein</keyword>
<keyword id="KW-0326">Glycosidase</keyword>
<keyword id="KW-0378">Hydrolase</keyword>
<keyword id="KW-0964">Secreted</keyword>
<keyword id="KW-0732">Signal</keyword>